<evidence type="ECO:0000255" key="1">
    <source>
        <dbReference type="HAMAP-Rule" id="MF_01372"/>
    </source>
</evidence>
<comment type="similarity">
    <text evidence="1">Belongs to the UPF0412 family.</text>
</comment>
<keyword id="KW-0732">Signal</keyword>
<organism>
    <name type="scientific">Escherichia coli (strain K12 / DH10B)</name>
    <dbReference type="NCBI Taxonomy" id="316385"/>
    <lineage>
        <taxon>Bacteria</taxon>
        <taxon>Pseudomonadati</taxon>
        <taxon>Pseudomonadota</taxon>
        <taxon>Gammaproteobacteria</taxon>
        <taxon>Enterobacterales</taxon>
        <taxon>Enterobacteriaceae</taxon>
        <taxon>Escherichia</taxon>
    </lineage>
</organism>
<accession>B1XBD8</accession>
<protein>
    <recommendedName>
        <fullName evidence="1">UPF0412 protein YaaI</fullName>
    </recommendedName>
</protein>
<name>YAAI_ECODH</name>
<sequence>MKSVFTISASLAISLMLCCTAQANDHKLLGAIAMPRNETNDLALKLPVCRIVKRIQLSADHGDLQLSGASVYFKAARSASQSLNIPSEIKEGQTTDWININSDNDNKRCVSKITFSGHTVNSSDMATLKIIGDD</sequence>
<proteinExistence type="inferred from homology"/>
<dbReference type="EMBL" id="CP000948">
    <property type="protein sequence ID" value="ACB01218.1"/>
    <property type="molecule type" value="Genomic_DNA"/>
</dbReference>
<dbReference type="RefSeq" id="WP_000843565.1">
    <property type="nucleotide sequence ID" value="NC_010473.1"/>
</dbReference>
<dbReference type="KEGG" id="ecd:ECDH10B_0013"/>
<dbReference type="HOGENOM" id="CLU_158661_0_0_6"/>
<dbReference type="HAMAP" id="MF_01372">
    <property type="entry name" value="UPF0412"/>
    <property type="match status" value="1"/>
</dbReference>
<dbReference type="InterPro" id="IPR020240">
    <property type="entry name" value="UPF0412_YaaI"/>
</dbReference>
<dbReference type="NCBIfam" id="NF007541">
    <property type="entry name" value="PRK10154.1"/>
    <property type="match status" value="1"/>
</dbReference>
<dbReference type="Pfam" id="PF10807">
    <property type="entry name" value="DUF2541"/>
    <property type="match status" value="1"/>
</dbReference>
<feature type="signal peptide" evidence="1">
    <location>
        <begin position="1"/>
        <end position="23"/>
    </location>
</feature>
<feature type="chain" id="PRO_1000144738" description="UPF0412 protein YaaI">
    <location>
        <begin position="24"/>
        <end position="134"/>
    </location>
</feature>
<gene>
    <name evidence="1" type="primary">yaaI</name>
    <name type="ordered locus">ECDH10B_0013</name>
</gene>
<reference key="1">
    <citation type="journal article" date="2008" name="J. Bacteriol.">
        <title>The complete genome sequence of Escherichia coli DH10B: insights into the biology of a laboratory workhorse.</title>
        <authorList>
            <person name="Durfee T."/>
            <person name="Nelson R."/>
            <person name="Baldwin S."/>
            <person name="Plunkett G. III"/>
            <person name="Burland V."/>
            <person name="Mau B."/>
            <person name="Petrosino J.F."/>
            <person name="Qin X."/>
            <person name="Muzny D.M."/>
            <person name="Ayele M."/>
            <person name="Gibbs R.A."/>
            <person name="Csorgo B."/>
            <person name="Posfai G."/>
            <person name="Weinstock G.M."/>
            <person name="Blattner F.R."/>
        </authorList>
    </citation>
    <scope>NUCLEOTIDE SEQUENCE [LARGE SCALE GENOMIC DNA]</scope>
    <source>
        <strain>K12 / DH10B</strain>
    </source>
</reference>